<accession>Q9URX8</accession>
<accession>Q9UU05</accession>
<proteinExistence type="inferred from homology"/>
<reference key="1">
    <citation type="journal article" date="2002" name="Nature">
        <title>The genome sequence of Schizosaccharomyces pombe.</title>
        <authorList>
            <person name="Wood V."/>
            <person name="Gwilliam R."/>
            <person name="Rajandream M.A."/>
            <person name="Lyne M.H."/>
            <person name="Lyne R."/>
            <person name="Stewart A."/>
            <person name="Sgouros J.G."/>
            <person name="Peat N."/>
            <person name="Hayles J."/>
            <person name="Baker S.G."/>
            <person name="Basham D."/>
            <person name="Bowman S."/>
            <person name="Brooks K."/>
            <person name="Brown D."/>
            <person name="Brown S."/>
            <person name="Chillingworth T."/>
            <person name="Churcher C.M."/>
            <person name="Collins M."/>
            <person name="Connor R."/>
            <person name="Cronin A."/>
            <person name="Davis P."/>
            <person name="Feltwell T."/>
            <person name="Fraser A."/>
            <person name="Gentles S."/>
            <person name="Goble A."/>
            <person name="Hamlin N."/>
            <person name="Harris D.E."/>
            <person name="Hidalgo J."/>
            <person name="Hodgson G."/>
            <person name="Holroyd S."/>
            <person name="Hornsby T."/>
            <person name="Howarth S."/>
            <person name="Huckle E.J."/>
            <person name="Hunt S."/>
            <person name="Jagels K."/>
            <person name="James K.D."/>
            <person name="Jones L."/>
            <person name="Jones M."/>
            <person name="Leather S."/>
            <person name="McDonald S."/>
            <person name="McLean J."/>
            <person name="Mooney P."/>
            <person name="Moule S."/>
            <person name="Mungall K.L."/>
            <person name="Murphy L.D."/>
            <person name="Niblett D."/>
            <person name="Odell C."/>
            <person name="Oliver K."/>
            <person name="O'Neil S."/>
            <person name="Pearson D."/>
            <person name="Quail M.A."/>
            <person name="Rabbinowitsch E."/>
            <person name="Rutherford K.M."/>
            <person name="Rutter S."/>
            <person name="Saunders D."/>
            <person name="Seeger K."/>
            <person name="Sharp S."/>
            <person name="Skelton J."/>
            <person name="Simmonds M.N."/>
            <person name="Squares R."/>
            <person name="Squares S."/>
            <person name="Stevens K."/>
            <person name="Taylor K."/>
            <person name="Taylor R.G."/>
            <person name="Tivey A."/>
            <person name="Walsh S.V."/>
            <person name="Warren T."/>
            <person name="Whitehead S."/>
            <person name="Woodward J.R."/>
            <person name="Volckaert G."/>
            <person name="Aert R."/>
            <person name="Robben J."/>
            <person name="Grymonprez B."/>
            <person name="Weltjens I."/>
            <person name="Vanstreels E."/>
            <person name="Rieger M."/>
            <person name="Schaefer M."/>
            <person name="Mueller-Auer S."/>
            <person name="Gabel C."/>
            <person name="Fuchs M."/>
            <person name="Duesterhoeft A."/>
            <person name="Fritzc C."/>
            <person name="Holzer E."/>
            <person name="Moestl D."/>
            <person name="Hilbert H."/>
            <person name="Borzym K."/>
            <person name="Langer I."/>
            <person name="Beck A."/>
            <person name="Lehrach H."/>
            <person name="Reinhardt R."/>
            <person name="Pohl T.M."/>
            <person name="Eger P."/>
            <person name="Zimmermann W."/>
            <person name="Wedler H."/>
            <person name="Wambutt R."/>
            <person name="Purnelle B."/>
            <person name="Goffeau A."/>
            <person name="Cadieu E."/>
            <person name="Dreano S."/>
            <person name="Gloux S."/>
            <person name="Lelaure V."/>
            <person name="Mottier S."/>
            <person name="Galibert F."/>
            <person name="Aves S.J."/>
            <person name="Xiang Z."/>
            <person name="Hunt C."/>
            <person name="Moore K."/>
            <person name="Hurst S.M."/>
            <person name="Lucas M."/>
            <person name="Rochet M."/>
            <person name="Gaillardin C."/>
            <person name="Tallada V.A."/>
            <person name="Garzon A."/>
            <person name="Thode G."/>
            <person name="Daga R.R."/>
            <person name="Cruzado L."/>
            <person name="Jimenez J."/>
            <person name="Sanchez M."/>
            <person name="del Rey F."/>
            <person name="Benito J."/>
            <person name="Dominguez A."/>
            <person name="Revuelta J.L."/>
            <person name="Moreno S."/>
            <person name="Armstrong J."/>
            <person name="Forsburg S.L."/>
            <person name="Cerutti L."/>
            <person name="Lowe T."/>
            <person name="McCombie W.R."/>
            <person name="Paulsen I."/>
            <person name="Potashkin J."/>
            <person name="Shpakovski G.V."/>
            <person name="Ussery D."/>
            <person name="Barrell B.G."/>
            <person name="Nurse P."/>
        </authorList>
    </citation>
    <scope>NUCLEOTIDE SEQUENCE [LARGE SCALE GENOMIC DNA]</scope>
    <source>
        <strain>972 / ATCC 24843</strain>
    </source>
</reference>
<reference key="2">
    <citation type="journal article" date="2000" name="Genes Cells">
        <title>Large-scale screening of intracellular protein localization in living fission yeast cells by the use of a GFP-fusion genomic DNA library.</title>
        <authorList>
            <person name="Ding D.-Q."/>
            <person name="Tomita Y."/>
            <person name="Yamamoto A."/>
            <person name="Chikashige Y."/>
            <person name="Haraguchi T."/>
            <person name="Hiraoka Y."/>
        </authorList>
    </citation>
    <scope>NUCLEOTIDE SEQUENCE [LARGE SCALE GENOMIC DNA] OF 708-891</scope>
    <scope>SUBCELLULAR LOCATION</scope>
    <source>
        <strain>ATCC 38364 / 968</strain>
    </source>
</reference>
<gene>
    <name type="ORF">SPAC890.06</name>
</gene>
<name>NG06_SCHPO</name>
<organism>
    <name type="scientific">Schizosaccharomyces pombe (strain 972 / ATCC 24843)</name>
    <name type="common">Fission yeast</name>
    <dbReference type="NCBI Taxonomy" id="284812"/>
    <lineage>
        <taxon>Eukaryota</taxon>
        <taxon>Fungi</taxon>
        <taxon>Dikarya</taxon>
        <taxon>Ascomycota</taxon>
        <taxon>Taphrinomycotina</taxon>
        <taxon>Schizosaccharomycetes</taxon>
        <taxon>Schizosaccharomycetales</taxon>
        <taxon>Schizosaccharomycetaceae</taxon>
        <taxon>Schizosaccharomyces</taxon>
    </lineage>
</organism>
<keyword id="KW-0963">Cytoplasm</keyword>
<keyword id="KW-0539">Nucleus</keyword>
<keyword id="KW-1185">Reference proteome</keyword>
<keyword id="KW-0813">Transport</keyword>
<evidence type="ECO:0000269" key="1">
    <source>
    </source>
</evidence>
<evidence type="ECO:0000305" key="2"/>
<protein>
    <recommendedName>
        <fullName>Probable nucleoporin C890.06</fullName>
    </recommendedName>
</protein>
<feature type="chain" id="PRO_0000204847" description="Probable nucleoporin C890.06">
    <location>
        <begin position="1"/>
        <end position="1315"/>
    </location>
</feature>
<dbReference type="EMBL" id="CU329670">
    <property type="protein sequence ID" value="CAB63497.1"/>
    <property type="molecule type" value="Genomic_DNA"/>
</dbReference>
<dbReference type="EMBL" id="AB027888">
    <property type="protein sequence ID" value="BAA87192.1"/>
    <property type="molecule type" value="Genomic_DNA"/>
</dbReference>
<dbReference type="PIR" id="T50262">
    <property type="entry name" value="T50262"/>
</dbReference>
<dbReference type="SMR" id="Q9URX8"/>
<dbReference type="BioGRID" id="279920">
    <property type="interactions" value="7"/>
</dbReference>
<dbReference type="FunCoup" id="Q9URX8">
    <property type="interactions" value="985"/>
</dbReference>
<dbReference type="STRING" id="284812.Q9URX8"/>
<dbReference type="iPTMnet" id="Q9URX8"/>
<dbReference type="SwissPalm" id="Q9URX8"/>
<dbReference type="PaxDb" id="4896-SPAC890.06.1"/>
<dbReference type="EnsemblFungi" id="SPAC890.06.1">
    <property type="protein sequence ID" value="SPAC890.06.1:pep"/>
    <property type="gene ID" value="SPAC890.06"/>
</dbReference>
<dbReference type="KEGG" id="spo:2543502"/>
<dbReference type="PomBase" id="SPAC890.06"/>
<dbReference type="VEuPathDB" id="FungiDB:SPAC890.06"/>
<dbReference type="eggNOG" id="KOG1900">
    <property type="taxonomic scope" value="Eukaryota"/>
</dbReference>
<dbReference type="HOGENOM" id="CLU_000429_0_1_1"/>
<dbReference type="InParanoid" id="Q9URX8"/>
<dbReference type="OMA" id="SWAPFQK"/>
<dbReference type="PhylomeDB" id="Q9URX8"/>
<dbReference type="Reactome" id="R-SPO-159227">
    <property type="pathway name" value="Transport of the SLBP independent Mature mRNA"/>
</dbReference>
<dbReference type="Reactome" id="R-SPO-159231">
    <property type="pathway name" value="Transport of Mature mRNA Derived from an Intronless Transcript"/>
</dbReference>
<dbReference type="Reactome" id="R-SPO-159236">
    <property type="pathway name" value="Transport of Mature mRNA derived from an Intron-Containing Transcript"/>
</dbReference>
<dbReference type="Reactome" id="R-SPO-3371453">
    <property type="pathway name" value="Regulation of HSF1-mediated heat shock response"/>
</dbReference>
<dbReference type="Reactome" id="R-SPO-4085377">
    <property type="pathway name" value="SUMOylation of SUMOylation proteins"/>
</dbReference>
<dbReference type="Reactome" id="R-SPO-4551638">
    <property type="pathway name" value="SUMOylation of chromatin organization proteins"/>
</dbReference>
<dbReference type="Reactome" id="R-SPO-4570464">
    <property type="pathway name" value="SUMOylation of RNA binding proteins"/>
</dbReference>
<dbReference type="Reactome" id="R-SPO-5578749">
    <property type="pathway name" value="Transcriptional regulation by small RNAs"/>
</dbReference>
<dbReference type="Reactome" id="R-SPO-9615933">
    <property type="pathway name" value="Postmitotic nuclear pore complex (NPC) reformation"/>
</dbReference>
<dbReference type="PRO" id="PR:Q9URX8"/>
<dbReference type="Proteomes" id="UP000002485">
    <property type="component" value="Chromosome I"/>
</dbReference>
<dbReference type="GO" id="GO:0005737">
    <property type="term" value="C:cytoplasm"/>
    <property type="evidence" value="ECO:0007005"/>
    <property type="project" value="PomBase"/>
</dbReference>
<dbReference type="GO" id="GO:0005635">
    <property type="term" value="C:nuclear envelope"/>
    <property type="evidence" value="ECO:0007005"/>
    <property type="project" value="PomBase"/>
</dbReference>
<dbReference type="GO" id="GO:0005643">
    <property type="term" value="C:nuclear pore"/>
    <property type="evidence" value="ECO:0000314"/>
    <property type="project" value="PomBase"/>
</dbReference>
<dbReference type="GO" id="GO:0044611">
    <property type="term" value="C:nuclear pore inner ring"/>
    <property type="evidence" value="ECO:0000318"/>
    <property type="project" value="GO_Central"/>
</dbReference>
<dbReference type="GO" id="GO:0017056">
    <property type="term" value="F:structural constituent of nuclear pore"/>
    <property type="evidence" value="ECO:0000318"/>
    <property type="project" value="GO_Central"/>
</dbReference>
<dbReference type="GO" id="GO:0006606">
    <property type="term" value="P:protein import into nucleus"/>
    <property type="evidence" value="ECO:0000318"/>
    <property type="project" value="GO_Central"/>
</dbReference>
<dbReference type="GO" id="GO:0036228">
    <property type="term" value="P:protein localization to nuclear inner membrane"/>
    <property type="evidence" value="ECO:0000318"/>
    <property type="project" value="GO_Central"/>
</dbReference>
<dbReference type="GO" id="GO:0000054">
    <property type="term" value="P:ribosomal subunit export from nucleus"/>
    <property type="evidence" value="ECO:0000266"/>
    <property type="project" value="PomBase"/>
</dbReference>
<dbReference type="GO" id="GO:0006405">
    <property type="term" value="P:RNA export from nucleus"/>
    <property type="evidence" value="ECO:0000318"/>
    <property type="project" value="GO_Central"/>
</dbReference>
<dbReference type="GO" id="GO:0000972">
    <property type="term" value="P:transcription-dependent tethering of RNA polymerase II gene DNA at nuclear periphery"/>
    <property type="evidence" value="ECO:0000318"/>
    <property type="project" value="GO_Central"/>
</dbReference>
<dbReference type="FunFam" id="1.20.120.1880:FF:000004">
    <property type="entry name" value="Non-repetitive nucleoporin, putative"/>
    <property type="match status" value="1"/>
</dbReference>
<dbReference type="FunFam" id="1.25.40.440:FF:000001">
    <property type="entry name" value="Nuclear pore complex subunit"/>
    <property type="match status" value="1"/>
</dbReference>
<dbReference type="Gene3D" id="1.20.58.1780">
    <property type="match status" value="1"/>
</dbReference>
<dbReference type="Gene3D" id="1.20.120.1880">
    <property type="entry name" value="Nucleoporin, helical C-terminal domain"/>
    <property type="match status" value="1"/>
</dbReference>
<dbReference type="Gene3D" id="1.25.40.440">
    <property type="entry name" value="Nucleoporin, helical domain, central subdomain"/>
    <property type="match status" value="1"/>
</dbReference>
<dbReference type="Gene3D" id="1.25.40.450">
    <property type="entry name" value="Nucleoporin, helical domain, N-terminal subdomain"/>
    <property type="match status" value="1"/>
</dbReference>
<dbReference type="InterPro" id="IPR007187">
    <property type="entry name" value="Nucleoporin_Nup133/Nup155_C"/>
</dbReference>
<dbReference type="InterPro" id="IPR014908">
    <property type="entry name" value="Nucleoporin_Nup133/Nup155_N"/>
</dbReference>
<dbReference type="InterPro" id="IPR004870">
    <property type="entry name" value="Nucleoporin_Nup155"/>
</dbReference>
<dbReference type="InterPro" id="IPR042533">
    <property type="entry name" value="Nucleoporin_Nup155_C_1"/>
</dbReference>
<dbReference type="InterPro" id="IPR042537">
    <property type="entry name" value="Nucleoporin_Nup155_C_2"/>
</dbReference>
<dbReference type="InterPro" id="IPR042538">
    <property type="entry name" value="Nucleoporin_Nup155_C_3"/>
</dbReference>
<dbReference type="PANTHER" id="PTHR10350">
    <property type="entry name" value="NUCLEAR PORE COMPLEX PROTEIN NUP155"/>
    <property type="match status" value="1"/>
</dbReference>
<dbReference type="PANTHER" id="PTHR10350:SF6">
    <property type="entry name" value="NUCLEAR PORE COMPLEX PROTEIN NUP155"/>
    <property type="match status" value="1"/>
</dbReference>
<dbReference type="Pfam" id="PF03177">
    <property type="entry name" value="Nucleoporin_C"/>
    <property type="match status" value="1"/>
</dbReference>
<dbReference type="Pfam" id="PF08801">
    <property type="entry name" value="Nucleoporin_N"/>
    <property type="match status" value="1"/>
</dbReference>
<dbReference type="SUPFAM" id="SSF101898">
    <property type="entry name" value="NHL repeat"/>
    <property type="match status" value="1"/>
</dbReference>
<sequence length="1315" mass="147631">MDINDPSFSSTENGIYELLSRGYAAIEAATERDLKLPELGDIIGQVHAPEYISQVLSGWKPFYLRSVVNIPDRIFEQYNRTECFTQMGLFAEIQRAWITVDNRLFLWDYLSGQNFQAYEDLSHTIVNVKLVRPKANVFVSEIQHLLVIATSQEMLLLGVTIDEKTGELSFFSTGIQISVQGINVNCIVSSEDGRIFFSGNKDPNLYEFSYQLEEGWFSRRCSKINITGSVFDNFIPSFFSFGTHGDGIKQIAVDDSRSLLYVLRETSSVSCYELTKNGVNRCVFYSFSSMISQAQMLNATSPLLDPRTTQIVSIVPIPAYESQQIYCVAITSTGCRFYMRGGRGPISHYAPSNSTLSSTPPSTLQLTFVRFPPPMQVENYASSRNYPANPFFLQNQSTSQQQPERSSAVKTTPMKCSSLSNIYTSDLFFAISSSNTNEGDVVCCTAPEVGRIANAWQSGTQPSLIESSMYVPIKGFVQDIKCIQNSRERNELVSQFNTPPPTFAILTNTGVYVVVHRRPIDVLASAIRMGPSLSSGIDGQVQLFFESVGRAEGCATCLGIVSGCLDQGDFSHAAANFSGSTTKLAQADLLDIVKKYYIEFGGKAFIDQSRYNNQYDSSSLEFVRLSGCHDGLASSISRIIRNVWKNHVIIAKKMQNKRIHYAPAFNATEILKIQSGLLYLSTFLENNKSFIEGLNSPNTLIGSSNVADEIAVQAEHRALSALLLVLQQIVEGISFLLFLNDTGVSDFHEIVSSTSIDIQKSCSNMTFGEFFTSKRGREVTKELVNSLVNRHLQSGGNIDMVSQLLRKKCGSFCSADDVLIFKAVESLKKAKDTVDIEERQSLIELSYTLFKKAAHVFTPEDLRLAVEEYKSLNAYTTAVNLALHVASARDDRNQALSYLVDGMPENDPRREPFESRTKCYSYIFEILDSLESQMSNDSSAIKVDVYDTIQRSKDELFHYCFYDWYSFKGLTDRLIEIDSPYIQSYLERNSTKDMKIADLLWQYYAKREQYYQASIVLYDLATTHLAFSLEQRIEYLTRAKGFGSCHVPNSLRHKMNKVMLSVLEQLDVASIQDDVLIAIRGDMRIPTSKREELSKQLDGEIIPLSDLFNNYADPLGYGEICLSIFQCADYRGINEILNCWESIIKTTHENAIISPVGSSPVEAVSSTLKNLTLRFSQSENVFPIEQIIDITERYAFDQQGEAVATGWVIDTFLGAGVSHELIFIVLNQLYDRREKPWQGKDRLFFLIKEVTHLLKLWHEVSVRAGVAQTSKPSFDAPLVLEAIEKYKNALGAPDTATKSCKENLISLDSEIRQTY</sequence>
<comment type="subcellular location">
    <subcellularLocation>
        <location evidence="1">Cytoplasm</location>
    </subcellularLocation>
    <subcellularLocation>
        <location evidence="1">Nucleus</location>
    </subcellularLocation>
    <text>Nuclear rim.</text>
</comment>
<comment type="similarity">
    <text evidence="2">Belongs to the non-repetitive/WGA-negative nucleoporin family.</text>
</comment>